<accession>P08196</accession>
<accession>Q40166</accession>
<proteinExistence type="evidence at protein level"/>
<evidence type="ECO:0000250" key="1">
    <source>
        <dbReference type="UniProtKB" id="P37272"/>
    </source>
</evidence>
<evidence type="ECO:0000255" key="2"/>
<evidence type="ECO:0000269" key="3">
    <source>
    </source>
</evidence>
<evidence type="ECO:0000305" key="4"/>
<dbReference type="EC" id="2.5.1.32"/>
<dbReference type="EMBL" id="M84744">
    <property type="protein sequence ID" value="AAA34153.1"/>
    <property type="molecule type" value="mRNA"/>
</dbReference>
<dbReference type="EMBL" id="Y00521">
    <property type="protein sequence ID" value="CAA68575.1"/>
    <property type="molecule type" value="mRNA"/>
</dbReference>
<dbReference type="EMBL" id="X60441">
    <property type="protein sequence ID" value="CAA42969.1"/>
    <property type="molecule type" value="Genomic_DNA"/>
</dbReference>
<dbReference type="EMBL" id="X67144">
    <property type="protein sequence ID" value="CAA47625.1"/>
    <property type="molecule type" value="mRNA"/>
</dbReference>
<dbReference type="PIR" id="A42102">
    <property type="entry name" value="A42102"/>
</dbReference>
<dbReference type="PIR" id="S22474">
    <property type="entry name" value="S22474"/>
</dbReference>
<dbReference type="RefSeq" id="NP_001234812.1">
    <property type="nucleotide sequence ID" value="NM_001247883.2"/>
</dbReference>
<dbReference type="RefSeq" id="NP_001334763.1">
    <property type="nucleotide sequence ID" value="NM_001347834.1"/>
</dbReference>
<dbReference type="RefSeq" id="NP_001334765.1">
    <property type="nucleotide sequence ID" value="NM_001347836.1"/>
</dbReference>
<dbReference type="RefSeq" id="NP_001334767.1">
    <property type="nucleotide sequence ID" value="NM_001347838.1"/>
</dbReference>
<dbReference type="RefSeq" id="XP_010317654.1">
    <property type="nucleotide sequence ID" value="XM_010319352.2"/>
</dbReference>
<dbReference type="SMR" id="P08196"/>
<dbReference type="FunCoup" id="P08196">
    <property type="interactions" value="249"/>
</dbReference>
<dbReference type="STRING" id="4081.P08196"/>
<dbReference type="PaxDb" id="4081-Solyc03g031860.2.1"/>
<dbReference type="EnsemblPlants" id="Solyc03g031860.3.1">
    <property type="protein sequence ID" value="Solyc03g031860.3.1"/>
    <property type="gene ID" value="Solyc03g031860.3"/>
</dbReference>
<dbReference type="GeneID" id="543988"/>
<dbReference type="Gramene" id="Solyc03g031860.3.1">
    <property type="protein sequence ID" value="Solyc03g031860.3.1"/>
    <property type="gene ID" value="Solyc03g031860.3"/>
</dbReference>
<dbReference type="KEGG" id="sly:543988"/>
<dbReference type="eggNOG" id="KOG1459">
    <property type="taxonomic scope" value="Eukaryota"/>
</dbReference>
<dbReference type="HOGENOM" id="CLU_037269_2_0_1"/>
<dbReference type="InParanoid" id="P08196"/>
<dbReference type="OMA" id="WVVSPCD"/>
<dbReference type="OrthoDB" id="6600518at2759"/>
<dbReference type="PhylomeDB" id="P08196"/>
<dbReference type="BRENDA" id="2.5.1.32">
    <property type="organism ID" value="3101"/>
</dbReference>
<dbReference type="SABIO-RK" id="P08196"/>
<dbReference type="UniPathway" id="UPA00799">
    <property type="reaction ID" value="UER00773"/>
</dbReference>
<dbReference type="Proteomes" id="UP000004994">
    <property type="component" value="Chromosome 3"/>
</dbReference>
<dbReference type="ExpressionAtlas" id="P08196">
    <property type="expression patterns" value="baseline and differential"/>
</dbReference>
<dbReference type="GO" id="GO:0009507">
    <property type="term" value="C:chloroplast"/>
    <property type="evidence" value="ECO:0007669"/>
    <property type="project" value="UniProtKB-SubCell"/>
</dbReference>
<dbReference type="GO" id="GO:0046905">
    <property type="term" value="F:15-cis-phytoene synthase activity"/>
    <property type="evidence" value="ECO:0000318"/>
    <property type="project" value="GO_Central"/>
</dbReference>
<dbReference type="GO" id="GO:0004311">
    <property type="term" value="F:geranylgeranyl diphosphate synthase activity"/>
    <property type="evidence" value="ECO:0007669"/>
    <property type="project" value="InterPro"/>
</dbReference>
<dbReference type="GO" id="GO:0051996">
    <property type="term" value="F:squalene synthase [NAD(P)H] activity"/>
    <property type="evidence" value="ECO:0007669"/>
    <property type="project" value="InterPro"/>
</dbReference>
<dbReference type="GO" id="GO:0016117">
    <property type="term" value="P:carotenoid biosynthetic process"/>
    <property type="evidence" value="ECO:0000318"/>
    <property type="project" value="GO_Central"/>
</dbReference>
<dbReference type="CDD" id="cd00683">
    <property type="entry name" value="Trans_IPPS_HH"/>
    <property type="match status" value="1"/>
</dbReference>
<dbReference type="FunFam" id="1.10.600.10:FF:000004">
    <property type="entry name" value="Phytoene synthase chloroplastic"/>
    <property type="match status" value="1"/>
</dbReference>
<dbReference type="Gene3D" id="1.10.600.10">
    <property type="entry name" value="Farnesyl Diphosphate Synthase"/>
    <property type="match status" value="1"/>
</dbReference>
<dbReference type="InterPro" id="IPR008949">
    <property type="entry name" value="Isoprenoid_synthase_dom_sf"/>
</dbReference>
<dbReference type="InterPro" id="IPR002060">
    <property type="entry name" value="Squ/phyt_synthse"/>
</dbReference>
<dbReference type="InterPro" id="IPR019845">
    <property type="entry name" value="Squalene/phytoene_synthase_CS"/>
</dbReference>
<dbReference type="InterPro" id="IPR044843">
    <property type="entry name" value="Trans_IPPS_bact-type"/>
</dbReference>
<dbReference type="InterPro" id="IPR033904">
    <property type="entry name" value="Trans_IPPS_HH"/>
</dbReference>
<dbReference type="PANTHER" id="PTHR31480">
    <property type="entry name" value="BIFUNCTIONAL LYCOPENE CYCLASE/PHYTOENE SYNTHASE"/>
    <property type="match status" value="1"/>
</dbReference>
<dbReference type="Pfam" id="PF00494">
    <property type="entry name" value="SQS_PSY"/>
    <property type="match status" value="1"/>
</dbReference>
<dbReference type="SFLD" id="SFLDS00005">
    <property type="entry name" value="Isoprenoid_Synthase_Type_I"/>
    <property type="match status" value="1"/>
</dbReference>
<dbReference type="SFLD" id="SFLDG01212">
    <property type="entry name" value="Phytoene_synthase_like"/>
    <property type="match status" value="1"/>
</dbReference>
<dbReference type="SUPFAM" id="SSF48576">
    <property type="entry name" value="Terpenoid synthases"/>
    <property type="match status" value="1"/>
</dbReference>
<dbReference type="PROSITE" id="PS01044">
    <property type="entry name" value="SQUALEN_PHYTOEN_SYN_1"/>
    <property type="match status" value="1"/>
</dbReference>
<dbReference type="PROSITE" id="PS01045">
    <property type="entry name" value="SQUALEN_PHYTOEN_SYN_2"/>
    <property type="match status" value="1"/>
</dbReference>
<name>PSY1_SOLLC</name>
<organism>
    <name type="scientific">Solanum lycopersicum</name>
    <name type="common">Tomato</name>
    <name type="synonym">Lycopersicon esculentum</name>
    <dbReference type="NCBI Taxonomy" id="4081"/>
    <lineage>
        <taxon>Eukaryota</taxon>
        <taxon>Viridiplantae</taxon>
        <taxon>Streptophyta</taxon>
        <taxon>Embryophyta</taxon>
        <taxon>Tracheophyta</taxon>
        <taxon>Spermatophyta</taxon>
        <taxon>Magnoliopsida</taxon>
        <taxon>eudicotyledons</taxon>
        <taxon>Gunneridae</taxon>
        <taxon>Pentapetalae</taxon>
        <taxon>asterids</taxon>
        <taxon>lamiids</taxon>
        <taxon>Solanales</taxon>
        <taxon>Solanaceae</taxon>
        <taxon>Solanoideae</taxon>
        <taxon>Solaneae</taxon>
        <taxon>Solanum</taxon>
        <taxon>Solanum subgen. Lycopersicon</taxon>
    </lineage>
</organism>
<reference key="1">
    <citation type="journal article" date="1992" name="J. Biol. Chem.">
        <title>A tomato gene expressed during fruit ripening encodes an enzyme of the carotenoid biosynthesis pathway.</title>
        <authorList>
            <person name="Bartley G.E."/>
            <person name="Viitanen P.V."/>
            <person name="Bacot K.O."/>
            <person name="Scolnik P.A."/>
        </authorList>
    </citation>
    <scope>NUCLEOTIDE SEQUENCE [MRNA]</scope>
    <scope>CHARACTERIZATION</scope>
</reference>
<reference key="2">
    <citation type="journal article" date="1993" name="Biochem. Biophys. Res. Commun.">
        <title>Expression of the genes encoding the early carotenoid biosynthetic enzymes in Capsicum annuum.</title>
        <authorList>
            <person name="Roemer S."/>
            <person name="Hugueney P."/>
            <person name="Bouvier F."/>
            <person name="Camara B."/>
            <person name="Kuntz M."/>
        </authorList>
    </citation>
    <scope>NUCLEOTIDE SEQUENCE</scope>
    <source>
        <strain>cv. Marmande</strain>
    </source>
</reference>
<reference key="3">
    <citation type="journal article" date="1987" name="Nucleic Acids Res.">
        <title>Sequence of pTOM5, a ripening related cDNA from tomato.</title>
        <authorList>
            <person name="Ray J."/>
            <person name="Bird C.R."/>
            <person name="Maunders M."/>
            <person name="Grierson D."/>
            <person name="Schuch W."/>
        </authorList>
    </citation>
    <scope>NUCLEOTIDE SEQUENCE [MRNA]</scope>
    <source>
        <strain>cv. Ailsa Craig</strain>
    </source>
</reference>
<reference key="4">
    <citation type="journal article" date="1992" name="Plant Mol. Biol.">
        <title>Cloning and characterization of a gene involved in phytoene synthesis from tomato.</title>
        <authorList>
            <person name="Ray J."/>
            <person name="Moureau P."/>
            <person name="Bird C."/>
            <person name="Bird A."/>
            <person name="Grierson D."/>
            <person name="Maunders M."/>
            <person name="Truesdale M."/>
            <person name="Bramley P."/>
            <person name="Schuch W."/>
        </authorList>
    </citation>
    <scope>NUCLEOTIDE SEQUENCE [GENOMIC DNA]</scope>
    <source>
        <strain>cv. Ailsa Craig</strain>
        <tissue>Leaf</tissue>
    </source>
</reference>
<reference key="5">
    <citation type="journal article" date="1993" name="Plant Mol. Biol.">
        <title>Identification and genetic analysis of normal and mutant phytoene synthase genes of tomato by sequencing, complementation and co-suppression.</title>
        <authorList>
            <person name="Fray R.G."/>
            <person name="Grierson D."/>
        </authorList>
    </citation>
    <scope>NUCLEOTIDE SEQUENCE [MRNA]</scope>
    <scope>MUTANT</scope>
    <source>
        <strain>cv. Ailsa Craig</strain>
        <tissue>Pericarp</tissue>
    </source>
</reference>
<reference key="6">
    <citation type="journal article" date="2013" name="New Phytol.">
        <title>A STAY-GREEN protein SlSGR1 regulates lycopene and beta-carotene accumulation by interacting directly with SlPSY1 during ripening processes in tomato.</title>
        <authorList>
            <person name="Luo Z."/>
            <person name="Zhang J."/>
            <person name="Li J."/>
            <person name="Yang C."/>
            <person name="Wang T."/>
            <person name="Ouyang B."/>
            <person name="Li H."/>
            <person name="Giovannoni J."/>
            <person name="Ye Z."/>
        </authorList>
    </citation>
    <scope>INTERACTION WITH SGR1</scope>
</reference>
<protein>
    <recommendedName>
        <fullName>Phytoene synthase 1, chloroplastic</fullName>
        <ecNumber>2.5.1.32</ecNumber>
    </recommendedName>
    <alternativeName>
        <fullName>Fruit-ripening-specific protein pTOM5</fullName>
    </alternativeName>
</protein>
<comment type="function">
    <text>Catalyzes the reaction from prephytoene diphosphate to phytoene.</text>
</comment>
<comment type="catalytic activity">
    <reaction>
        <text>2 (2E,6E,10E)-geranylgeranyl diphosphate = 15-cis-phytoene + 2 diphosphate</text>
        <dbReference type="Rhea" id="RHEA:34475"/>
        <dbReference type="ChEBI" id="CHEBI:27787"/>
        <dbReference type="ChEBI" id="CHEBI:33019"/>
        <dbReference type="ChEBI" id="CHEBI:58756"/>
        <dbReference type="EC" id="2.5.1.32"/>
    </reaction>
</comment>
<comment type="pathway">
    <text>Carotenoid biosynthesis; phytoene biosynthesis; all-trans-phytoene from geranylgeranyl diphosphate: step 1/1.</text>
</comment>
<comment type="subunit">
    <text evidence="1 3">Monomer (By similarity). Interacts with SGR1 (PubMed:23406468).</text>
</comment>
<comment type="subcellular location">
    <subcellularLocation>
        <location>Plastid</location>
        <location>Chloroplast</location>
    </subcellularLocation>
</comment>
<comment type="developmental stage">
    <text>In seedlings and in late stages of fruit ripening.</text>
</comment>
<comment type="induction">
    <text>By fruit ripening.</text>
</comment>
<comment type="similarity">
    <text evidence="4">Belongs to the phytoene/squalene synthase family.</text>
</comment>
<gene>
    <name type="primary">PSY1</name>
    <name type="synonym">GTOM5</name>
    <name type="synonym">PTOM5</name>
    <name type="synonym">TOM5</name>
</gene>
<feature type="transit peptide" description="Chloroplast" evidence="2">
    <location>
        <begin position="1"/>
        <end position="129"/>
    </location>
</feature>
<feature type="chain" id="PRO_0000029856" description="Phytoene synthase 1, chloroplastic">
    <location>
        <begin position="130"/>
        <end position="412"/>
    </location>
</feature>
<feature type="mutagenesis site" description="Lack of carotenoids in fruits.">
    <original>KKLIALPIAYAKSLVPPTKTASLQR</original>
    <variation>NMLKDFFSNFKGSKRGSNATTTLVG</variation>
    <location>
        <begin position="388"/>
        <end position="412"/>
    </location>
</feature>
<feature type="sequence conflict" description="In Ref. 3; CAA68575." evidence="4" ref="3">
    <original>KLIALPIAYAKSLVPPTKT</original>
    <variation>QVDCITYCICKISCASYKN</variation>
    <location>
        <begin position="389"/>
        <end position="407"/>
    </location>
</feature>
<feature type="sequence conflict" description="In Ref. 4; CAA47625." evidence="4" ref="4">
    <original>KLIALPIAYAKSLVPPT</original>
    <variation>QVDCITYCICKISCASY</variation>
    <location>
        <begin position="389"/>
        <end position="405"/>
    </location>
</feature>
<sequence length="412" mass="46615">MSVALLWVVSPCDVSNGTSFMESVREGNRFFDSSRHRNLVSNERINRGGGKQTNNGRKFSVRSAILATPSGERTMTSEQMVYDVVLRQAALVKRQLRSTNELEVKPDIPIPGNLGLLSEAYDRCGEVCAEYAKTFNLGTMLMTPERRRAIWAIYVWCRRTDELVDGPNASYITPAALDRWENRLEDVFNGRPFDMLDGALSDTVSNFPVDIQPFRDMIEGMRMDLRKSRYKNFDELYLYCYYVAGTVGLMSVPIMGIAPESKATTESVYNAALALGIANQLTNILRDVGEDARRGRVYLPQDELAQAGLSDEDIFAGRVTDKWRIFMKKQIHRARKFFDEAEKGVTELSSASRFPVWASLVLYRKILDEIEANDYNNFTKRAYVSKSKKLIALPIAYAKSLVPPTKTASLQR</sequence>
<keyword id="KW-0125">Carotenoid biosynthesis</keyword>
<keyword id="KW-0150">Chloroplast</keyword>
<keyword id="KW-0414">Isoprene biosynthesis</keyword>
<keyword id="KW-0934">Plastid</keyword>
<keyword id="KW-1185">Reference proteome</keyword>
<keyword id="KW-0808">Transferase</keyword>
<keyword id="KW-0809">Transit peptide</keyword>